<proteinExistence type="inferred from homology"/>
<reference key="1">
    <citation type="journal article" date="2008" name="PLoS Genet.">
        <title>Genomic islands in the pathogenic filamentous fungus Aspergillus fumigatus.</title>
        <authorList>
            <person name="Fedorova N.D."/>
            <person name="Khaldi N."/>
            <person name="Joardar V.S."/>
            <person name="Maiti R."/>
            <person name="Amedeo P."/>
            <person name="Anderson M.J."/>
            <person name="Crabtree J."/>
            <person name="Silva J.C."/>
            <person name="Badger J.H."/>
            <person name="Albarraq A."/>
            <person name="Angiuoli S."/>
            <person name="Bussey H."/>
            <person name="Bowyer P."/>
            <person name="Cotty P.J."/>
            <person name="Dyer P.S."/>
            <person name="Egan A."/>
            <person name="Galens K."/>
            <person name="Fraser-Liggett C.M."/>
            <person name="Haas B.J."/>
            <person name="Inman J.M."/>
            <person name="Kent R."/>
            <person name="Lemieux S."/>
            <person name="Malavazi I."/>
            <person name="Orvis J."/>
            <person name="Roemer T."/>
            <person name="Ronning C.M."/>
            <person name="Sundaram J.P."/>
            <person name="Sutton G."/>
            <person name="Turner G."/>
            <person name="Venter J.C."/>
            <person name="White O.R."/>
            <person name="Whitty B.R."/>
            <person name="Youngman P."/>
            <person name="Wolfe K.H."/>
            <person name="Goldman G.H."/>
            <person name="Wortman J.R."/>
            <person name="Jiang B."/>
            <person name="Denning D.W."/>
            <person name="Nierman W.C."/>
        </authorList>
    </citation>
    <scope>NUCLEOTIDE SEQUENCE [LARGE SCALE GENOMIC DNA]</scope>
    <source>
        <strain>ATCC 1007 / CBS 513.65 / DSM 816 / NCTC 3887 / NRRL 1 / QM 1276 / 107</strain>
    </source>
</reference>
<dbReference type="EC" id="3.6.4.13"/>
<dbReference type="EMBL" id="DS027058">
    <property type="protein sequence ID" value="EAW08844.1"/>
    <property type="molecule type" value="Genomic_DNA"/>
</dbReference>
<dbReference type="RefSeq" id="XP_001270270.1">
    <property type="nucleotide sequence ID" value="XM_001270269.1"/>
</dbReference>
<dbReference type="SMR" id="A1CMQ7"/>
<dbReference type="STRING" id="344612.A1CMQ7"/>
<dbReference type="EnsemblFungi" id="EAW08844">
    <property type="protein sequence ID" value="EAW08844"/>
    <property type="gene ID" value="ACLA_097850"/>
</dbReference>
<dbReference type="GeneID" id="4702373"/>
<dbReference type="KEGG" id="act:ACLA_097850"/>
<dbReference type="VEuPathDB" id="FungiDB:ACLA_097850"/>
<dbReference type="eggNOG" id="KOG0329">
    <property type="taxonomic scope" value="Eukaryota"/>
</dbReference>
<dbReference type="HOGENOM" id="CLU_003041_1_0_1"/>
<dbReference type="OMA" id="YAHVEPK"/>
<dbReference type="OrthoDB" id="10265785at2759"/>
<dbReference type="Proteomes" id="UP000006701">
    <property type="component" value="Unassembled WGS sequence"/>
</dbReference>
<dbReference type="GO" id="GO:0000781">
    <property type="term" value="C:chromosome, telomeric region"/>
    <property type="evidence" value="ECO:0007669"/>
    <property type="project" value="EnsemblFungi"/>
</dbReference>
<dbReference type="GO" id="GO:0005681">
    <property type="term" value="C:spliceosomal complex"/>
    <property type="evidence" value="ECO:0007669"/>
    <property type="project" value="UniProtKB-KW"/>
</dbReference>
<dbReference type="GO" id="GO:0000346">
    <property type="term" value="C:transcription export complex"/>
    <property type="evidence" value="ECO:0007669"/>
    <property type="project" value="EnsemblFungi"/>
</dbReference>
<dbReference type="GO" id="GO:0005524">
    <property type="term" value="F:ATP binding"/>
    <property type="evidence" value="ECO:0007669"/>
    <property type="project" value="UniProtKB-KW"/>
</dbReference>
<dbReference type="GO" id="GO:0016887">
    <property type="term" value="F:ATP hydrolysis activity"/>
    <property type="evidence" value="ECO:0007669"/>
    <property type="project" value="RHEA"/>
</dbReference>
<dbReference type="GO" id="GO:0003723">
    <property type="term" value="F:RNA binding"/>
    <property type="evidence" value="ECO:0007669"/>
    <property type="project" value="UniProtKB-KW"/>
</dbReference>
<dbReference type="GO" id="GO:0003724">
    <property type="term" value="F:RNA helicase activity"/>
    <property type="evidence" value="ECO:0007669"/>
    <property type="project" value="UniProtKB-EC"/>
</dbReference>
<dbReference type="GO" id="GO:0031124">
    <property type="term" value="P:mRNA 3'-end processing"/>
    <property type="evidence" value="ECO:0007669"/>
    <property type="project" value="EnsemblFungi"/>
</dbReference>
<dbReference type="GO" id="GO:0006406">
    <property type="term" value="P:mRNA export from nucleus"/>
    <property type="evidence" value="ECO:0007669"/>
    <property type="project" value="EnsemblFungi"/>
</dbReference>
<dbReference type="GO" id="GO:0000398">
    <property type="term" value="P:mRNA splicing, via spliceosome"/>
    <property type="evidence" value="ECO:0007669"/>
    <property type="project" value="EnsemblFungi"/>
</dbReference>
<dbReference type="GO" id="GO:0031509">
    <property type="term" value="P:subtelomeric heterochromatin formation"/>
    <property type="evidence" value="ECO:0007669"/>
    <property type="project" value="EnsemblFungi"/>
</dbReference>
<dbReference type="GO" id="GO:0006368">
    <property type="term" value="P:transcription elongation by RNA polymerase II"/>
    <property type="evidence" value="ECO:0007669"/>
    <property type="project" value="EnsemblFungi"/>
</dbReference>
<dbReference type="GO" id="GO:0006283">
    <property type="term" value="P:transcription-coupled nucleotide-excision repair"/>
    <property type="evidence" value="ECO:0007669"/>
    <property type="project" value="EnsemblFungi"/>
</dbReference>
<dbReference type="CDD" id="cd17950">
    <property type="entry name" value="DEADc_DDX39"/>
    <property type="match status" value="1"/>
</dbReference>
<dbReference type="CDD" id="cd18787">
    <property type="entry name" value="SF2_C_DEAD"/>
    <property type="match status" value="1"/>
</dbReference>
<dbReference type="FunFam" id="3.40.50.300:FF:000111">
    <property type="entry name" value="DEAD-box ATP-dependent RNA helicase"/>
    <property type="match status" value="1"/>
</dbReference>
<dbReference type="FunFam" id="3.40.50.300:FF:000168">
    <property type="entry name" value="DEAD-box ATP-dependent RNA helicase 56-like"/>
    <property type="match status" value="1"/>
</dbReference>
<dbReference type="Gene3D" id="3.40.50.300">
    <property type="entry name" value="P-loop containing nucleotide triphosphate hydrolases"/>
    <property type="match status" value="2"/>
</dbReference>
<dbReference type="InterPro" id="IPR011545">
    <property type="entry name" value="DEAD/DEAH_box_helicase_dom"/>
</dbReference>
<dbReference type="InterPro" id="IPR014001">
    <property type="entry name" value="Helicase_ATP-bd"/>
</dbReference>
<dbReference type="InterPro" id="IPR001650">
    <property type="entry name" value="Helicase_C-like"/>
</dbReference>
<dbReference type="InterPro" id="IPR027417">
    <property type="entry name" value="P-loop_NTPase"/>
</dbReference>
<dbReference type="InterPro" id="IPR014014">
    <property type="entry name" value="RNA_helicase_DEAD_Q_motif"/>
</dbReference>
<dbReference type="PANTHER" id="PTHR47958">
    <property type="entry name" value="ATP-DEPENDENT RNA HELICASE DBP3"/>
    <property type="match status" value="1"/>
</dbReference>
<dbReference type="Pfam" id="PF00270">
    <property type="entry name" value="DEAD"/>
    <property type="match status" value="1"/>
</dbReference>
<dbReference type="Pfam" id="PF00271">
    <property type="entry name" value="Helicase_C"/>
    <property type="match status" value="1"/>
</dbReference>
<dbReference type="SMART" id="SM00487">
    <property type="entry name" value="DEXDc"/>
    <property type="match status" value="1"/>
</dbReference>
<dbReference type="SMART" id="SM00490">
    <property type="entry name" value="HELICc"/>
    <property type="match status" value="1"/>
</dbReference>
<dbReference type="SUPFAM" id="SSF52540">
    <property type="entry name" value="P-loop containing nucleoside triphosphate hydrolases"/>
    <property type="match status" value="1"/>
</dbReference>
<dbReference type="PROSITE" id="PS51192">
    <property type="entry name" value="HELICASE_ATP_BIND_1"/>
    <property type="match status" value="1"/>
</dbReference>
<dbReference type="PROSITE" id="PS51194">
    <property type="entry name" value="HELICASE_CTER"/>
    <property type="match status" value="1"/>
</dbReference>
<dbReference type="PROSITE" id="PS51195">
    <property type="entry name" value="Q_MOTIF"/>
    <property type="match status" value="1"/>
</dbReference>
<organism>
    <name type="scientific">Aspergillus clavatus (strain ATCC 1007 / CBS 513.65 / DSM 816 / NCTC 3887 / NRRL 1 / QM 1276 / 107)</name>
    <dbReference type="NCBI Taxonomy" id="344612"/>
    <lineage>
        <taxon>Eukaryota</taxon>
        <taxon>Fungi</taxon>
        <taxon>Dikarya</taxon>
        <taxon>Ascomycota</taxon>
        <taxon>Pezizomycotina</taxon>
        <taxon>Eurotiomycetes</taxon>
        <taxon>Eurotiomycetidae</taxon>
        <taxon>Eurotiales</taxon>
        <taxon>Aspergillaceae</taxon>
        <taxon>Aspergillus</taxon>
        <taxon>Aspergillus subgen. Fumigati</taxon>
    </lineage>
</organism>
<accession>A1CMQ7</accession>
<sequence>MSHEEDLIDYSDEELQTTDAAATTAAPAANGAQDKKGDLTVSGGRPDKKGSYVGIHSTGFRDFLLKGELLRAITDCGFEHPSEVQQVCIPTAILNVDVLCQAKSGLGKTAVFVLTTLHQLEPVPGECSVLVMCHTRELAYQIKNEYARFSKYLPDVKTAVFYGGTPIQKDVEVLSNKESYPNIVVGTPGRLNALVRDKKLSLRNVKAFVLDECDKMLDQIDMRRDVQEIFRATPADKQVMMFSATLSQEIRPICKKFMRNPLEVYVDDDTKLTLHGLQQYYIKLSESEKNRKLNELLDSLEFNQVIIFVKSTLRANELDKLLRECNFPSIAVHSGVSQEERIKRYKEFKEFNKRICVATDVFGRGIDIERINLAINYDLPADADSYLHRVGRAGRFGTKGLSISFVSNEDDEKVLKEIEKRFEVALPEYPEGGVDSSTYMA</sequence>
<protein>
    <recommendedName>
        <fullName>ATP-dependent RNA helicase sub2</fullName>
        <ecNumber>3.6.4.13</ecNumber>
    </recommendedName>
</protein>
<comment type="function">
    <text evidence="1">ATP-binding RNA helicase involved in transcription elongation and required for the export of mRNA out of the nucleus. SUB2 also plays a role in pre-mRNA splicing and spliceosome assembly. May be involved in rDNA and telomeric silencing, and maintenance of genome integrity (By similarity).</text>
</comment>
<comment type="catalytic activity">
    <reaction>
        <text>ATP + H2O = ADP + phosphate + H(+)</text>
        <dbReference type="Rhea" id="RHEA:13065"/>
        <dbReference type="ChEBI" id="CHEBI:15377"/>
        <dbReference type="ChEBI" id="CHEBI:15378"/>
        <dbReference type="ChEBI" id="CHEBI:30616"/>
        <dbReference type="ChEBI" id="CHEBI:43474"/>
        <dbReference type="ChEBI" id="CHEBI:456216"/>
        <dbReference type="EC" id="3.6.4.13"/>
    </reaction>
</comment>
<comment type="subcellular location">
    <subcellularLocation>
        <location evidence="1">Nucleus</location>
    </subcellularLocation>
</comment>
<comment type="domain">
    <text>The Q motif is unique to and characteristic of the DEAD box family of RNA helicases and controls ATP binding and hydrolysis.</text>
</comment>
<comment type="similarity">
    <text evidence="5">Belongs to the DEAD box helicase family. DECD subfamily.</text>
</comment>
<gene>
    <name type="primary">sub2</name>
    <name type="ORF">ACLA_097850</name>
</gene>
<feature type="chain" id="PRO_0000282686" description="ATP-dependent RNA helicase sub2">
    <location>
        <begin position="1"/>
        <end position="441"/>
    </location>
</feature>
<feature type="domain" description="Helicase ATP-binding" evidence="2">
    <location>
        <begin position="89"/>
        <end position="264"/>
    </location>
</feature>
<feature type="domain" description="Helicase C-terminal" evidence="3">
    <location>
        <begin position="276"/>
        <end position="437"/>
    </location>
</feature>
<feature type="region of interest" description="Disordered" evidence="4">
    <location>
        <begin position="19"/>
        <end position="43"/>
    </location>
</feature>
<feature type="short sequence motif" description="Q motif">
    <location>
        <begin position="58"/>
        <end position="86"/>
    </location>
</feature>
<feature type="short sequence motif" description="DEAD box">
    <location>
        <begin position="211"/>
        <end position="214"/>
    </location>
</feature>
<feature type="compositionally biased region" description="Low complexity" evidence="4">
    <location>
        <begin position="19"/>
        <end position="29"/>
    </location>
</feature>
<feature type="binding site" evidence="2">
    <location>
        <begin position="102"/>
        <end position="109"/>
    </location>
    <ligand>
        <name>ATP</name>
        <dbReference type="ChEBI" id="CHEBI:30616"/>
    </ligand>
</feature>
<evidence type="ECO:0000250" key="1"/>
<evidence type="ECO:0000255" key="2">
    <source>
        <dbReference type="PROSITE-ProRule" id="PRU00541"/>
    </source>
</evidence>
<evidence type="ECO:0000255" key="3">
    <source>
        <dbReference type="PROSITE-ProRule" id="PRU00542"/>
    </source>
</evidence>
<evidence type="ECO:0000256" key="4">
    <source>
        <dbReference type="SAM" id="MobiDB-lite"/>
    </source>
</evidence>
<evidence type="ECO:0000305" key="5"/>
<name>SUB2_ASPCL</name>
<keyword id="KW-0067">ATP-binding</keyword>
<keyword id="KW-0347">Helicase</keyword>
<keyword id="KW-0378">Hydrolase</keyword>
<keyword id="KW-0507">mRNA processing</keyword>
<keyword id="KW-0508">mRNA splicing</keyword>
<keyword id="KW-0509">mRNA transport</keyword>
<keyword id="KW-0547">Nucleotide-binding</keyword>
<keyword id="KW-0539">Nucleus</keyword>
<keyword id="KW-1185">Reference proteome</keyword>
<keyword id="KW-0694">RNA-binding</keyword>
<keyword id="KW-0747">Spliceosome</keyword>
<keyword id="KW-0813">Transport</keyword>